<protein>
    <recommendedName>
        <fullName evidence="1">Phospho-N-acetylmuramoyl-pentapeptide-transferase</fullName>
        <ecNumber evidence="1">2.7.8.13</ecNumber>
    </recommendedName>
    <alternativeName>
        <fullName evidence="1">UDP-MurNAc-pentapeptide phosphotransferase</fullName>
    </alternativeName>
</protein>
<feature type="chain" id="PRO_1000117191" description="Phospho-N-acetylmuramoyl-pentapeptide-transferase">
    <location>
        <begin position="1"/>
        <end position="361"/>
    </location>
</feature>
<feature type="transmembrane region" description="Helical" evidence="1">
    <location>
        <begin position="21"/>
        <end position="41"/>
    </location>
</feature>
<feature type="transmembrane region" description="Helical" evidence="1">
    <location>
        <begin position="72"/>
        <end position="92"/>
    </location>
</feature>
<feature type="transmembrane region" description="Helical" evidence="1">
    <location>
        <begin position="94"/>
        <end position="114"/>
    </location>
</feature>
<feature type="transmembrane region" description="Helical" evidence="1">
    <location>
        <begin position="135"/>
        <end position="155"/>
    </location>
</feature>
<feature type="transmembrane region" description="Helical" evidence="1">
    <location>
        <begin position="169"/>
        <end position="189"/>
    </location>
</feature>
<feature type="transmembrane region" description="Helical" evidence="1">
    <location>
        <begin position="200"/>
        <end position="220"/>
    </location>
</feature>
<feature type="transmembrane region" description="Helical" evidence="1">
    <location>
        <begin position="240"/>
        <end position="260"/>
    </location>
</feature>
<feature type="transmembrane region" description="Helical" evidence="1">
    <location>
        <begin position="263"/>
        <end position="283"/>
    </location>
</feature>
<feature type="transmembrane region" description="Helical" evidence="1">
    <location>
        <begin position="289"/>
        <end position="309"/>
    </location>
</feature>
<feature type="transmembrane region" description="Helical" evidence="1">
    <location>
        <begin position="338"/>
        <end position="358"/>
    </location>
</feature>
<sequence length="361" mass="38870">MLFNLLYPLADEFQIFNLFRYITFRTGGAMVTALLISFVIGPRVIRWLKSVQGEGQPIRTDGPETHLKKKGTPTMGGLMILIAVIVSTLLWVDLANVYTWIVLLVTVGFGLIGFGDDFLKLTKRNTKGLSGRLKLAWTIAIAGVAATWYIAVTPHPLDTGLAVPFFKDLLVNLGWFFIPFAILVMVGASNAVNLTDGLDGLAIVPIMIAAATFGLIAYLSGNAIFAGYLQIHHVPGTGELAVFCGALVGAGLGFLWFNAPPAMVFMGDTGSLSMGGALGAVSVMTKHELVLAIVGGLFVLEAVSVMVQVASFKLTGKRVFRMAPIHHHFEKKGWSEPTVVIRFWIIAAILALVGLSTLKLR</sequence>
<organism>
    <name type="scientific">Rhodospirillum centenum (strain ATCC 51521 / SW)</name>
    <dbReference type="NCBI Taxonomy" id="414684"/>
    <lineage>
        <taxon>Bacteria</taxon>
        <taxon>Pseudomonadati</taxon>
        <taxon>Pseudomonadota</taxon>
        <taxon>Alphaproteobacteria</taxon>
        <taxon>Rhodospirillales</taxon>
        <taxon>Rhodospirillaceae</taxon>
        <taxon>Rhodospirillum</taxon>
    </lineage>
</organism>
<gene>
    <name evidence="1" type="primary">mraY</name>
    <name type="ordered locus">RC1_0616</name>
</gene>
<accession>B6IRG5</accession>
<dbReference type="EC" id="2.7.8.13" evidence="1"/>
<dbReference type="EMBL" id="CP000613">
    <property type="protein sequence ID" value="ACI98051.1"/>
    <property type="molecule type" value="Genomic_DNA"/>
</dbReference>
<dbReference type="RefSeq" id="WP_012565843.1">
    <property type="nucleotide sequence ID" value="NC_011420.2"/>
</dbReference>
<dbReference type="SMR" id="B6IRG5"/>
<dbReference type="STRING" id="414684.RC1_0616"/>
<dbReference type="KEGG" id="rce:RC1_0616"/>
<dbReference type="eggNOG" id="COG0472">
    <property type="taxonomic scope" value="Bacteria"/>
</dbReference>
<dbReference type="HOGENOM" id="CLU_023982_0_0_5"/>
<dbReference type="OrthoDB" id="9805475at2"/>
<dbReference type="UniPathway" id="UPA00219"/>
<dbReference type="Proteomes" id="UP000001591">
    <property type="component" value="Chromosome"/>
</dbReference>
<dbReference type="GO" id="GO:0005886">
    <property type="term" value="C:plasma membrane"/>
    <property type="evidence" value="ECO:0007669"/>
    <property type="project" value="UniProtKB-SubCell"/>
</dbReference>
<dbReference type="GO" id="GO:0046872">
    <property type="term" value="F:metal ion binding"/>
    <property type="evidence" value="ECO:0007669"/>
    <property type="project" value="UniProtKB-KW"/>
</dbReference>
<dbReference type="GO" id="GO:0008963">
    <property type="term" value="F:phospho-N-acetylmuramoyl-pentapeptide-transferase activity"/>
    <property type="evidence" value="ECO:0007669"/>
    <property type="project" value="UniProtKB-UniRule"/>
</dbReference>
<dbReference type="GO" id="GO:0051992">
    <property type="term" value="F:UDP-N-acetylmuramoyl-L-alanyl-D-glutamyl-meso-2,6-diaminopimelyl-D-alanyl-D-alanine:undecaprenyl-phosphate transferase activity"/>
    <property type="evidence" value="ECO:0007669"/>
    <property type="project" value="RHEA"/>
</dbReference>
<dbReference type="GO" id="GO:0051301">
    <property type="term" value="P:cell division"/>
    <property type="evidence" value="ECO:0007669"/>
    <property type="project" value="UniProtKB-KW"/>
</dbReference>
<dbReference type="GO" id="GO:0071555">
    <property type="term" value="P:cell wall organization"/>
    <property type="evidence" value="ECO:0007669"/>
    <property type="project" value="UniProtKB-KW"/>
</dbReference>
<dbReference type="GO" id="GO:0009252">
    <property type="term" value="P:peptidoglycan biosynthetic process"/>
    <property type="evidence" value="ECO:0007669"/>
    <property type="project" value="UniProtKB-UniRule"/>
</dbReference>
<dbReference type="GO" id="GO:0008360">
    <property type="term" value="P:regulation of cell shape"/>
    <property type="evidence" value="ECO:0007669"/>
    <property type="project" value="UniProtKB-KW"/>
</dbReference>
<dbReference type="CDD" id="cd06852">
    <property type="entry name" value="GT_MraY"/>
    <property type="match status" value="1"/>
</dbReference>
<dbReference type="HAMAP" id="MF_00038">
    <property type="entry name" value="MraY"/>
    <property type="match status" value="1"/>
</dbReference>
<dbReference type="InterPro" id="IPR000715">
    <property type="entry name" value="Glycosyl_transferase_4"/>
</dbReference>
<dbReference type="InterPro" id="IPR003524">
    <property type="entry name" value="PNAcMuramoyl-5peptid_Trfase"/>
</dbReference>
<dbReference type="InterPro" id="IPR018480">
    <property type="entry name" value="PNAcMuramoyl-5peptid_Trfase_CS"/>
</dbReference>
<dbReference type="NCBIfam" id="TIGR00445">
    <property type="entry name" value="mraY"/>
    <property type="match status" value="1"/>
</dbReference>
<dbReference type="PANTHER" id="PTHR22926">
    <property type="entry name" value="PHOSPHO-N-ACETYLMURAMOYL-PENTAPEPTIDE-TRANSFERASE"/>
    <property type="match status" value="1"/>
</dbReference>
<dbReference type="PANTHER" id="PTHR22926:SF5">
    <property type="entry name" value="PHOSPHO-N-ACETYLMURAMOYL-PENTAPEPTIDE-TRANSFERASE HOMOLOG"/>
    <property type="match status" value="1"/>
</dbReference>
<dbReference type="Pfam" id="PF00953">
    <property type="entry name" value="Glycos_transf_4"/>
    <property type="match status" value="1"/>
</dbReference>
<dbReference type="Pfam" id="PF10555">
    <property type="entry name" value="MraY_sig1"/>
    <property type="match status" value="1"/>
</dbReference>
<dbReference type="PROSITE" id="PS01347">
    <property type="entry name" value="MRAY_1"/>
    <property type="match status" value="1"/>
</dbReference>
<dbReference type="PROSITE" id="PS01348">
    <property type="entry name" value="MRAY_2"/>
    <property type="match status" value="1"/>
</dbReference>
<keyword id="KW-0131">Cell cycle</keyword>
<keyword id="KW-0132">Cell division</keyword>
<keyword id="KW-0997">Cell inner membrane</keyword>
<keyword id="KW-1003">Cell membrane</keyword>
<keyword id="KW-0133">Cell shape</keyword>
<keyword id="KW-0961">Cell wall biogenesis/degradation</keyword>
<keyword id="KW-0460">Magnesium</keyword>
<keyword id="KW-0472">Membrane</keyword>
<keyword id="KW-0479">Metal-binding</keyword>
<keyword id="KW-0573">Peptidoglycan synthesis</keyword>
<keyword id="KW-1185">Reference proteome</keyword>
<keyword id="KW-0808">Transferase</keyword>
<keyword id="KW-0812">Transmembrane</keyword>
<keyword id="KW-1133">Transmembrane helix</keyword>
<name>MRAY_RHOCS</name>
<comment type="function">
    <text evidence="1">Catalyzes the initial step of the lipid cycle reactions in the biosynthesis of the cell wall peptidoglycan: transfers peptidoglycan precursor phospho-MurNAc-pentapeptide from UDP-MurNAc-pentapeptide onto the lipid carrier undecaprenyl phosphate, yielding undecaprenyl-pyrophosphoryl-MurNAc-pentapeptide, known as lipid I.</text>
</comment>
<comment type="catalytic activity">
    <reaction evidence="1">
        <text>UDP-N-acetyl-alpha-D-muramoyl-L-alanyl-gamma-D-glutamyl-meso-2,6-diaminopimeloyl-D-alanyl-D-alanine + di-trans,octa-cis-undecaprenyl phosphate = di-trans,octa-cis-undecaprenyl diphospho-N-acetyl-alpha-D-muramoyl-L-alanyl-D-glutamyl-meso-2,6-diaminopimeloyl-D-alanyl-D-alanine + UMP</text>
        <dbReference type="Rhea" id="RHEA:28386"/>
        <dbReference type="ChEBI" id="CHEBI:57865"/>
        <dbReference type="ChEBI" id="CHEBI:60392"/>
        <dbReference type="ChEBI" id="CHEBI:61386"/>
        <dbReference type="ChEBI" id="CHEBI:61387"/>
        <dbReference type="EC" id="2.7.8.13"/>
    </reaction>
</comment>
<comment type="cofactor">
    <cofactor evidence="1">
        <name>Mg(2+)</name>
        <dbReference type="ChEBI" id="CHEBI:18420"/>
    </cofactor>
</comment>
<comment type="pathway">
    <text evidence="1">Cell wall biogenesis; peptidoglycan biosynthesis.</text>
</comment>
<comment type="subcellular location">
    <subcellularLocation>
        <location evidence="1">Cell inner membrane</location>
        <topology evidence="1">Multi-pass membrane protein</topology>
    </subcellularLocation>
</comment>
<comment type="similarity">
    <text evidence="1">Belongs to the glycosyltransferase 4 family. MraY subfamily.</text>
</comment>
<reference key="1">
    <citation type="submission" date="2007-03" db="EMBL/GenBank/DDBJ databases">
        <title>Genome sequence of Rhodospirillum centenum.</title>
        <authorList>
            <person name="Touchman J.W."/>
            <person name="Bauer C."/>
            <person name="Blankenship R.E."/>
        </authorList>
    </citation>
    <scope>NUCLEOTIDE SEQUENCE [LARGE SCALE GENOMIC DNA]</scope>
    <source>
        <strain>ATCC 51521 / SW</strain>
    </source>
</reference>
<evidence type="ECO:0000255" key="1">
    <source>
        <dbReference type="HAMAP-Rule" id="MF_00038"/>
    </source>
</evidence>
<proteinExistence type="inferred from homology"/>